<proteinExistence type="inferred from homology"/>
<evidence type="ECO:0000250" key="1"/>
<evidence type="ECO:0000250" key="2">
    <source>
        <dbReference type="UniProtKB" id="P68363"/>
    </source>
</evidence>
<evidence type="ECO:0000305" key="3"/>
<reference key="1">
    <citation type="thesis" date="1990" institute="University of Tuebingen" country="Germany">
        <authorList>
            <person name="Gaunitz F."/>
        </authorList>
    </citation>
    <scope>NUCLEOTIDE SEQUENCE [GENOMIC DNA]</scope>
</reference>
<organism>
    <name type="scientific">Oxytricha granulifera</name>
    <name type="common">Ciliate</name>
    <dbReference type="NCBI Taxonomy" id="5947"/>
    <lineage>
        <taxon>Eukaryota</taxon>
        <taxon>Sar</taxon>
        <taxon>Alveolata</taxon>
        <taxon>Ciliophora</taxon>
        <taxon>Intramacronucleata</taxon>
        <taxon>Spirotrichea</taxon>
        <taxon>Stichotrichia</taxon>
        <taxon>Sporadotrichida</taxon>
        <taxon>Oxytrichidae</taxon>
        <taxon>Oxytrichinae</taxon>
        <taxon>Oxytricha</taxon>
    </lineage>
</organism>
<accession>P28287</accession>
<sequence>MREVISIHVGQAGIQVGNACWELFCLEHGIQPDGQMPSDKTIGGGDDAFNTFFSETGAGKHVPRCVFLDLEPTVDDEVRTGTYRQLFHPEQLISGKEDAANNFARGHYTIGKEIVDLCLDRIRKLADQCTGLQGFLVFNSVGGGTGSGLGSLLLERLSVDYGKKSKLGFTVYPSPQVSTAVVEPYNSVLSTHSLLEHTDVAVMLDNEAVYDICRRNLDIERPTYTNLNRLIAQVISSLTASLRFDGALNVDVTEFQTNLVPYPRIHFMLSSYAPVISAEKAYHEQLSVAEITNSAFEPASMMAKCDPRHGKYMACCLMYRGDVVPKDVNAAVATIKTKRTIQFVDWCPTGFKCGINYQPPTVVPGGDLAKVMRAVCMISNSTAIAEVFSRIDHKFDLMYAKRAFVHWYVGEGMEEGEFSEAREDLAALEKDYEEVGIETAEGEGEEEGME</sequence>
<comment type="function">
    <text>Tubulin is the major constituent of microtubules, a cylinder consisting of laterally associated linear protofilaments composed of alpha- and beta-tubulin heterodimers. Microtubules grow by the addition of GTP-tubulin dimers to the microtubule end, where a stabilizing cap forms. Below the cap, tubulin dimers are in GDP-bound state, owing to GTPase activity of alpha-tubulin.</text>
</comment>
<comment type="catalytic activity">
    <reaction evidence="2">
        <text>GTP + H2O = GDP + phosphate + H(+)</text>
        <dbReference type="Rhea" id="RHEA:19669"/>
        <dbReference type="ChEBI" id="CHEBI:15377"/>
        <dbReference type="ChEBI" id="CHEBI:15378"/>
        <dbReference type="ChEBI" id="CHEBI:37565"/>
        <dbReference type="ChEBI" id="CHEBI:43474"/>
        <dbReference type="ChEBI" id="CHEBI:58189"/>
    </reaction>
    <physiologicalReaction direction="left-to-right" evidence="2">
        <dbReference type="Rhea" id="RHEA:19670"/>
    </physiologicalReaction>
</comment>
<comment type="cofactor">
    <cofactor evidence="2">
        <name>Mg(2+)</name>
        <dbReference type="ChEBI" id="CHEBI:18420"/>
    </cofactor>
</comment>
<comment type="subunit">
    <text>Dimer of alpha and beta chains. A typical microtubule is a hollow water-filled tube with an outer diameter of 25 nm and an inner diameter of 15 nM. Alpha-beta heterodimers associate head-to-tail to form protofilaments running lengthwise along the microtubule wall with the beta-tubulin subunit facing the microtubule plus end conferring a structural polarity. Microtubules usually have 13 protofilaments but different protofilament numbers can be found in some organisms and specialized cells.</text>
</comment>
<comment type="subcellular location">
    <subcellularLocation>
        <location>Cytoplasm</location>
        <location>Cytoskeleton</location>
    </subcellularLocation>
</comment>
<comment type="PTM">
    <text evidence="1">Acetylation of alpha chains at Lys-40 stabilizes microtubules and affects affinity and processivity of microtubule motors. This modification has a role in multiple cellular functions, ranging from cell motility, cell cycle progression or cell differentiation to intracellular trafficking and signaling (By similarity).</text>
</comment>
<comment type="similarity">
    <text evidence="3">Belongs to the tubulin family.</text>
</comment>
<keyword id="KW-0007">Acetylation</keyword>
<keyword id="KW-0963">Cytoplasm</keyword>
<keyword id="KW-0206">Cytoskeleton</keyword>
<keyword id="KW-0342">GTP-binding</keyword>
<keyword id="KW-0378">Hydrolase</keyword>
<keyword id="KW-0460">Magnesium</keyword>
<keyword id="KW-0479">Metal-binding</keyword>
<keyword id="KW-0493">Microtubule</keyword>
<keyword id="KW-0547">Nucleotide-binding</keyword>
<protein>
    <recommendedName>
        <fullName>Tubulin alpha chain</fullName>
        <ecNumber evidence="2">3.6.5.-</ecNumber>
    </recommendedName>
</protein>
<dbReference type="EC" id="3.6.5.-" evidence="2"/>
<dbReference type="EMBL" id="Z11763">
    <property type="protein sequence ID" value="CAA77810.1"/>
    <property type="molecule type" value="Genomic_DNA"/>
</dbReference>
<dbReference type="SMR" id="P28287"/>
<dbReference type="GO" id="GO:0005737">
    <property type="term" value="C:cytoplasm"/>
    <property type="evidence" value="ECO:0007669"/>
    <property type="project" value="UniProtKB-KW"/>
</dbReference>
<dbReference type="GO" id="GO:0005874">
    <property type="term" value="C:microtubule"/>
    <property type="evidence" value="ECO:0007669"/>
    <property type="project" value="UniProtKB-KW"/>
</dbReference>
<dbReference type="GO" id="GO:0005525">
    <property type="term" value="F:GTP binding"/>
    <property type="evidence" value="ECO:0007669"/>
    <property type="project" value="UniProtKB-KW"/>
</dbReference>
<dbReference type="GO" id="GO:0016787">
    <property type="term" value="F:hydrolase activity"/>
    <property type="evidence" value="ECO:0007669"/>
    <property type="project" value="UniProtKB-KW"/>
</dbReference>
<dbReference type="GO" id="GO:0046872">
    <property type="term" value="F:metal ion binding"/>
    <property type="evidence" value="ECO:0007669"/>
    <property type="project" value="UniProtKB-KW"/>
</dbReference>
<dbReference type="GO" id="GO:0005200">
    <property type="term" value="F:structural constituent of cytoskeleton"/>
    <property type="evidence" value="ECO:0007669"/>
    <property type="project" value="InterPro"/>
</dbReference>
<dbReference type="GO" id="GO:0007017">
    <property type="term" value="P:microtubule-based process"/>
    <property type="evidence" value="ECO:0007669"/>
    <property type="project" value="InterPro"/>
</dbReference>
<dbReference type="CDD" id="cd02186">
    <property type="entry name" value="alpha_tubulin"/>
    <property type="match status" value="1"/>
</dbReference>
<dbReference type="FunFam" id="1.10.287.600:FF:000005">
    <property type="entry name" value="Tubulin alpha chain"/>
    <property type="match status" value="1"/>
</dbReference>
<dbReference type="FunFam" id="3.30.1330.20:FF:000001">
    <property type="entry name" value="Tubulin alpha chain"/>
    <property type="match status" value="1"/>
</dbReference>
<dbReference type="FunFam" id="3.40.50.1440:FF:000004">
    <property type="entry name" value="Tubulin alpha chain"/>
    <property type="match status" value="1"/>
</dbReference>
<dbReference type="Gene3D" id="1.10.287.600">
    <property type="entry name" value="Helix hairpin bin"/>
    <property type="match status" value="1"/>
</dbReference>
<dbReference type="Gene3D" id="3.30.1330.20">
    <property type="entry name" value="Tubulin/FtsZ, C-terminal domain"/>
    <property type="match status" value="1"/>
</dbReference>
<dbReference type="Gene3D" id="3.40.50.1440">
    <property type="entry name" value="Tubulin/FtsZ, GTPase domain"/>
    <property type="match status" value="1"/>
</dbReference>
<dbReference type="InterPro" id="IPR002452">
    <property type="entry name" value="Alpha_tubulin"/>
</dbReference>
<dbReference type="InterPro" id="IPR008280">
    <property type="entry name" value="Tub_FtsZ_C"/>
</dbReference>
<dbReference type="InterPro" id="IPR000217">
    <property type="entry name" value="Tubulin"/>
</dbReference>
<dbReference type="InterPro" id="IPR037103">
    <property type="entry name" value="Tubulin/FtsZ-like_C"/>
</dbReference>
<dbReference type="InterPro" id="IPR018316">
    <property type="entry name" value="Tubulin/FtsZ_2-layer-sand-dom"/>
</dbReference>
<dbReference type="InterPro" id="IPR036525">
    <property type="entry name" value="Tubulin/FtsZ_GTPase_sf"/>
</dbReference>
<dbReference type="InterPro" id="IPR023123">
    <property type="entry name" value="Tubulin_C"/>
</dbReference>
<dbReference type="InterPro" id="IPR017975">
    <property type="entry name" value="Tubulin_CS"/>
</dbReference>
<dbReference type="InterPro" id="IPR003008">
    <property type="entry name" value="Tubulin_FtsZ_GTPase"/>
</dbReference>
<dbReference type="PANTHER" id="PTHR11588">
    <property type="entry name" value="TUBULIN"/>
    <property type="match status" value="1"/>
</dbReference>
<dbReference type="Pfam" id="PF00091">
    <property type="entry name" value="Tubulin"/>
    <property type="match status" value="1"/>
</dbReference>
<dbReference type="Pfam" id="PF03953">
    <property type="entry name" value="Tubulin_C"/>
    <property type="match status" value="1"/>
</dbReference>
<dbReference type="PRINTS" id="PR01162">
    <property type="entry name" value="ALPHATUBULIN"/>
</dbReference>
<dbReference type="PRINTS" id="PR01161">
    <property type="entry name" value="TUBULIN"/>
</dbReference>
<dbReference type="SMART" id="SM00864">
    <property type="entry name" value="Tubulin"/>
    <property type="match status" value="1"/>
</dbReference>
<dbReference type="SMART" id="SM00865">
    <property type="entry name" value="Tubulin_C"/>
    <property type="match status" value="1"/>
</dbReference>
<dbReference type="SUPFAM" id="SSF55307">
    <property type="entry name" value="Tubulin C-terminal domain-like"/>
    <property type="match status" value="1"/>
</dbReference>
<dbReference type="SUPFAM" id="SSF52490">
    <property type="entry name" value="Tubulin nucleotide-binding domain-like"/>
    <property type="match status" value="1"/>
</dbReference>
<dbReference type="PROSITE" id="PS00227">
    <property type="entry name" value="TUBULIN"/>
    <property type="match status" value="1"/>
</dbReference>
<name>TBA_OXYGR</name>
<feature type="chain" id="PRO_0000048207" description="Tubulin alpha chain">
    <location>
        <begin position="1"/>
        <end position="450"/>
    </location>
</feature>
<feature type="active site" evidence="2">
    <location>
        <position position="254"/>
    </location>
</feature>
<feature type="binding site" evidence="2">
    <location>
        <position position="11"/>
    </location>
    <ligand>
        <name>GTP</name>
        <dbReference type="ChEBI" id="CHEBI:37565"/>
    </ligand>
</feature>
<feature type="binding site" evidence="2">
    <location>
        <position position="71"/>
    </location>
    <ligand>
        <name>GTP</name>
        <dbReference type="ChEBI" id="CHEBI:37565"/>
    </ligand>
</feature>
<feature type="binding site" evidence="2">
    <location>
        <position position="71"/>
    </location>
    <ligand>
        <name>Mg(2+)</name>
        <dbReference type="ChEBI" id="CHEBI:18420"/>
    </ligand>
</feature>
<feature type="binding site" evidence="2">
    <location>
        <position position="140"/>
    </location>
    <ligand>
        <name>GTP</name>
        <dbReference type="ChEBI" id="CHEBI:37565"/>
    </ligand>
</feature>
<feature type="binding site" evidence="2">
    <location>
        <position position="144"/>
    </location>
    <ligand>
        <name>GTP</name>
        <dbReference type="ChEBI" id="CHEBI:37565"/>
    </ligand>
</feature>
<feature type="binding site" evidence="2">
    <location>
        <position position="145"/>
    </location>
    <ligand>
        <name>GTP</name>
        <dbReference type="ChEBI" id="CHEBI:37565"/>
    </ligand>
</feature>
<feature type="binding site" evidence="2">
    <location>
        <position position="179"/>
    </location>
    <ligand>
        <name>GTP</name>
        <dbReference type="ChEBI" id="CHEBI:37565"/>
    </ligand>
</feature>
<feature type="binding site" evidence="2">
    <location>
        <position position="206"/>
    </location>
    <ligand>
        <name>GTP</name>
        <dbReference type="ChEBI" id="CHEBI:37565"/>
    </ligand>
</feature>
<feature type="binding site" evidence="2">
    <location>
        <position position="228"/>
    </location>
    <ligand>
        <name>GTP</name>
        <dbReference type="ChEBI" id="CHEBI:37565"/>
    </ligand>
</feature>
<feature type="modified residue" description="N6-acetyllysine" evidence="1">
    <location>
        <position position="40"/>
    </location>
</feature>